<dbReference type="EMBL" id="FM242711">
    <property type="protein sequence ID" value="CAS05196.1"/>
    <property type="molecule type" value="Genomic_DNA"/>
</dbReference>
<dbReference type="RefSeq" id="WP_003721929.1">
    <property type="nucleotide sequence ID" value="NC_012488.1"/>
</dbReference>
<dbReference type="SMR" id="C1L2Y0"/>
<dbReference type="KEGG" id="lmc:Lm4b_01433"/>
<dbReference type="HOGENOM" id="CLU_020088_2_0_9"/>
<dbReference type="GO" id="GO:0005886">
    <property type="term" value="C:plasma membrane"/>
    <property type="evidence" value="ECO:0007669"/>
    <property type="project" value="UniProtKB-SubCell"/>
</dbReference>
<dbReference type="GO" id="GO:0015086">
    <property type="term" value="F:cadmium ion transmembrane transporter activity"/>
    <property type="evidence" value="ECO:0007669"/>
    <property type="project" value="TreeGrafter"/>
</dbReference>
<dbReference type="GO" id="GO:0005384">
    <property type="term" value="F:manganese ion transmembrane transporter activity"/>
    <property type="evidence" value="ECO:0007669"/>
    <property type="project" value="TreeGrafter"/>
</dbReference>
<dbReference type="GO" id="GO:0046872">
    <property type="term" value="F:metal ion binding"/>
    <property type="evidence" value="ECO:0007669"/>
    <property type="project" value="UniProtKB-UniRule"/>
</dbReference>
<dbReference type="GO" id="GO:0015293">
    <property type="term" value="F:symporter activity"/>
    <property type="evidence" value="ECO:0007669"/>
    <property type="project" value="UniProtKB-UniRule"/>
</dbReference>
<dbReference type="GO" id="GO:0034755">
    <property type="term" value="P:iron ion transmembrane transport"/>
    <property type="evidence" value="ECO:0007669"/>
    <property type="project" value="TreeGrafter"/>
</dbReference>
<dbReference type="HAMAP" id="MF_00221">
    <property type="entry name" value="NRAMP"/>
    <property type="match status" value="1"/>
</dbReference>
<dbReference type="InterPro" id="IPR001046">
    <property type="entry name" value="NRAMP_fam"/>
</dbReference>
<dbReference type="NCBIfam" id="TIGR01197">
    <property type="entry name" value="nramp"/>
    <property type="match status" value="1"/>
</dbReference>
<dbReference type="NCBIfam" id="NF037982">
    <property type="entry name" value="Nramp_1"/>
    <property type="match status" value="1"/>
</dbReference>
<dbReference type="NCBIfam" id="NF001923">
    <property type="entry name" value="PRK00701.1"/>
    <property type="match status" value="1"/>
</dbReference>
<dbReference type="PANTHER" id="PTHR11706:SF33">
    <property type="entry name" value="NATURAL RESISTANCE-ASSOCIATED MACROPHAGE PROTEIN 2"/>
    <property type="match status" value="1"/>
</dbReference>
<dbReference type="PANTHER" id="PTHR11706">
    <property type="entry name" value="SOLUTE CARRIER PROTEIN FAMILY 11 MEMBER"/>
    <property type="match status" value="1"/>
</dbReference>
<dbReference type="Pfam" id="PF01566">
    <property type="entry name" value="Nramp"/>
    <property type="match status" value="1"/>
</dbReference>
<dbReference type="PRINTS" id="PR00447">
    <property type="entry name" value="NATRESASSCMP"/>
</dbReference>
<comment type="function">
    <text evidence="1">H(+)-stimulated, divalent metal cation uptake system.</text>
</comment>
<comment type="subcellular location">
    <subcellularLocation>
        <location evidence="1">Cell membrane</location>
        <topology evidence="1">Multi-pass membrane protein</topology>
    </subcellularLocation>
</comment>
<comment type="similarity">
    <text evidence="1">Belongs to the NRAMP family.</text>
</comment>
<protein>
    <recommendedName>
        <fullName evidence="1">Divalent metal cation transporter MntH</fullName>
    </recommendedName>
</protein>
<name>MNTH_LISMC</name>
<keyword id="KW-1003">Cell membrane</keyword>
<keyword id="KW-0406">Ion transport</keyword>
<keyword id="KW-0472">Membrane</keyword>
<keyword id="KW-0769">Symport</keyword>
<keyword id="KW-0812">Transmembrane</keyword>
<keyword id="KW-1133">Transmembrane helix</keyword>
<keyword id="KW-0813">Transport</keyword>
<evidence type="ECO:0000255" key="1">
    <source>
        <dbReference type="HAMAP-Rule" id="MF_00221"/>
    </source>
</evidence>
<evidence type="ECO:0000256" key="2">
    <source>
        <dbReference type="SAM" id="MobiDB-lite"/>
    </source>
</evidence>
<reference key="1">
    <citation type="journal article" date="2012" name="BMC Genomics">
        <title>Comparative genomics and transcriptomics of lineages I, II, and III strains of Listeria monocytogenes.</title>
        <authorList>
            <person name="Hain T."/>
            <person name="Ghai R."/>
            <person name="Billion A."/>
            <person name="Kuenne C.T."/>
            <person name="Steinweg C."/>
            <person name="Izar B."/>
            <person name="Mohamed W."/>
            <person name="Mraheil M."/>
            <person name="Domann E."/>
            <person name="Schaffrath S."/>
            <person name="Karst U."/>
            <person name="Goesmann A."/>
            <person name="Oehm S."/>
            <person name="Puhler A."/>
            <person name="Merkl R."/>
            <person name="Vorwerk S."/>
            <person name="Glaser P."/>
            <person name="Garrido P."/>
            <person name="Rusniok C."/>
            <person name="Buchrieser C."/>
            <person name="Goebel W."/>
            <person name="Chakraborty T."/>
        </authorList>
    </citation>
    <scope>NUCLEOTIDE SEQUENCE [LARGE SCALE GENOMIC DNA]</scope>
    <source>
        <strain>CLIP80459</strain>
    </source>
</reference>
<proteinExistence type="inferred from homology"/>
<accession>C1L2Y0</accession>
<organism>
    <name type="scientific">Listeria monocytogenes serotype 4b (strain CLIP80459)</name>
    <dbReference type="NCBI Taxonomy" id="568819"/>
    <lineage>
        <taxon>Bacteria</taxon>
        <taxon>Bacillati</taxon>
        <taxon>Bacillota</taxon>
        <taxon>Bacilli</taxon>
        <taxon>Bacillales</taxon>
        <taxon>Listeriaceae</taxon>
        <taxon>Listeria</taxon>
    </lineage>
</organism>
<gene>
    <name evidence="1" type="primary">mntH</name>
    <name type="ordered locus">Lm4b_01433</name>
</gene>
<sequence length="448" mass="48623">MKKDKTERTKQSWRKAQNAPSLSEVNNSVAIPKNAKFFRKLFAFMGPGALIAVGYVDPGNWATSIAGGSEFGYTLLSVILISNILAVLLQSLASKLGIVTGRDLAQASSDHFSKPFGFVLWILAELAIIATDIAEVIGSAIALNLLFGIPLIWGVCITALDIFLVLFLQHKGFRYIEVIVITLMVTILVCFGAEMVMSHPDMQAIAKGFIPQSEIVTNPAMLYIALGILGATVMPHNLYLHSSIVQTRQYARTKEGKKEAIRFSFIDSTFSLTIALLINASILILAAAAFYTTGQHNVAGIEDAYKLLNPTLGSSIASTVFAVALLASGQNSTLTGTLAGQIVMEGFLNIRLKPVVRRLLTRVLAIVPAVIITALYGANGINELLIFSQVILSMQLSFAVIPLVMFTSDKQKMGEFVNPTWLKIISWAVAIFIAVLNIYLLFYTLTSL</sequence>
<feature type="chain" id="PRO_1000204256" description="Divalent metal cation transporter MntH">
    <location>
        <begin position="1"/>
        <end position="448"/>
    </location>
</feature>
<feature type="transmembrane region" description="Helical" evidence="1">
    <location>
        <begin position="41"/>
        <end position="61"/>
    </location>
</feature>
<feature type="transmembrane region" description="Helical" evidence="1">
    <location>
        <begin position="69"/>
        <end position="89"/>
    </location>
</feature>
<feature type="transmembrane region" description="Helical" evidence="1">
    <location>
        <begin position="117"/>
        <end position="137"/>
    </location>
</feature>
<feature type="transmembrane region" description="Helical" evidence="1">
    <location>
        <begin position="147"/>
        <end position="167"/>
    </location>
</feature>
<feature type="transmembrane region" description="Helical" evidence="1">
    <location>
        <begin position="176"/>
        <end position="196"/>
    </location>
</feature>
<feature type="transmembrane region" description="Helical" evidence="1">
    <location>
        <begin position="215"/>
        <end position="235"/>
    </location>
</feature>
<feature type="transmembrane region" description="Helical" evidence="1">
    <location>
        <begin position="270"/>
        <end position="290"/>
    </location>
</feature>
<feature type="transmembrane region" description="Helical" evidence="1">
    <location>
        <begin position="307"/>
        <end position="327"/>
    </location>
</feature>
<feature type="transmembrane region" description="Helical" evidence="1">
    <location>
        <begin position="363"/>
        <end position="383"/>
    </location>
</feature>
<feature type="transmembrane region" description="Helical" evidence="1">
    <location>
        <begin position="384"/>
        <end position="404"/>
    </location>
</feature>
<feature type="transmembrane region" description="Helical" evidence="1">
    <location>
        <begin position="424"/>
        <end position="444"/>
    </location>
</feature>
<feature type="region of interest" description="Disordered" evidence="2">
    <location>
        <begin position="1"/>
        <end position="20"/>
    </location>
</feature>
<feature type="compositionally biased region" description="Basic and acidic residues" evidence="2">
    <location>
        <begin position="1"/>
        <end position="10"/>
    </location>
</feature>